<reference key="1">
    <citation type="submission" date="2007-11" db="EMBL/GenBank/DDBJ databases">
        <title>The genome sequence of the hyperthermophilic bacterium Thermotoga neapolitana.</title>
        <authorList>
            <person name="Lim S.K."/>
            <person name="Kim J.S."/>
            <person name="Cha S.H."/>
            <person name="Park B.C."/>
            <person name="Lee D.S."/>
            <person name="Tae H.S."/>
            <person name="Kim S.-J."/>
            <person name="Kim J.J."/>
            <person name="Park K.J."/>
            <person name="Lee S.Y."/>
        </authorList>
    </citation>
    <scope>NUCLEOTIDE SEQUENCE [LARGE SCALE GENOMIC DNA]</scope>
    <source>
        <strain>ATCC 49049 / DSM 4359 / NBRC 107923 / NS-E</strain>
    </source>
</reference>
<comment type="function">
    <text evidence="1">Catalyzes the GTP-dependent ribosomal translocation step during translation elongation. During this step, the ribosome changes from the pre-translocational (PRE) to the post-translocational (POST) state as the newly formed A-site-bound peptidyl-tRNA and P-site-bound deacylated tRNA move to the P and E sites, respectively. Catalyzes the coordinated movement of the two tRNA molecules, the mRNA and conformational changes in the ribosome.</text>
</comment>
<comment type="subcellular location">
    <subcellularLocation>
        <location evidence="1">Cytoplasm</location>
    </subcellularLocation>
</comment>
<comment type="similarity">
    <text evidence="1">Belongs to the TRAFAC class translation factor GTPase superfamily. Classic translation factor GTPase family. EF-G/EF-2 subfamily.</text>
</comment>
<organism>
    <name type="scientific">Thermotoga neapolitana (strain ATCC 49049 / DSM 4359 / NBRC 107923 / NS-E)</name>
    <dbReference type="NCBI Taxonomy" id="309803"/>
    <lineage>
        <taxon>Bacteria</taxon>
        <taxon>Thermotogati</taxon>
        <taxon>Thermotogota</taxon>
        <taxon>Thermotogae</taxon>
        <taxon>Thermotogales</taxon>
        <taxon>Thermotogaceae</taxon>
        <taxon>Thermotoga</taxon>
    </lineage>
</organism>
<protein>
    <recommendedName>
        <fullName evidence="1">Elongation factor G</fullName>
        <shortName evidence="1">EF-G</shortName>
    </recommendedName>
</protein>
<evidence type="ECO:0000255" key="1">
    <source>
        <dbReference type="HAMAP-Rule" id="MF_00054"/>
    </source>
</evidence>
<gene>
    <name evidence="1" type="primary">fusA</name>
    <name type="ordered locus">CTN_0990</name>
</gene>
<sequence length="695" mass="78034">MQSVEARYVDLDKIRNIGIMAHIDAGKTTTTERILYYTGRKHFIGDVDEGTATTDWMPQEKERGITIQSAATTCFWKGYRINIIDTPGHVDFTAEVERALRVLDGAIAVFDATAGVEPQSETVWRQADKYNVPRIAFMNKMDKVGADFYMAVETLVTKLRANPIPIQMPIGSEKDFQGVIDLIKMKAIYWTSEDGSVYEEREIPDELKEEAELRREEMLEKVAELDETILEKYLEGEEITEEEIKKVLRKATIENRAVPVLCGAAKMNKGIQPLLDAVIDYLPSPLDLPPVKGWRLSDGEVVYRKPDENEPFTALVFKVQVDPYIGKLVYFRVYSGRLEKGSYVYNSTKGQRERISRIVFMHADKREEVDYVRPGDIAAGVGLKASQTGDTLCDEKEPTVLEKIDFPEPVISLAIEPATKSDEEKLVKALLALSEEDPTLQVKVDKETGETIISGMGELHLEIIVDRLKREFGVNVRVGQPQVAYRETIKKAAEAEGKYIRQTGGRGQYGHVILRIEPIPEEEGKNFEFIDKTVGGVIPKEFMPAIEAGIKEAMMSGPLAGYPVVRIRAIVLDGSYHEVDSSEMAFKIAASLAFKEAMKKAQPVLLEPIMKLEITTPEEYMGNIIADLNSRRAKVEALETRGHLKVIVAKVPLSETFGYATTLRSLSQGRASYIMQFSHYQEVPEKIAEKIIKVV</sequence>
<dbReference type="EMBL" id="CP000916">
    <property type="protein sequence ID" value="ACM23166.1"/>
    <property type="molecule type" value="Genomic_DNA"/>
</dbReference>
<dbReference type="RefSeq" id="WP_015919483.1">
    <property type="nucleotide sequence ID" value="NC_011978.1"/>
</dbReference>
<dbReference type="SMR" id="B9K883"/>
<dbReference type="STRING" id="309803.CTN_0990"/>
<dbReference type="KEGG" id="tna:CTN_0990"/>
<dbReference type="eggNOG" id="COG0480">
    <property type="taxonomic scope" value="Bacteria"/>
</dbReference>
<dbReference type="HOGENOM" id="CLU_002794_4_1_0"/>
<dbReference type="Proteomes" id="UP000000445">
    <property type="component" value="Chromosome"/>
</dbReference>
<dbReference type="GO" id="GO:0005737">
    <property type="term" value="C:cytoplasm"/>
    <property type="evidence" value="ECO:0007669"/>
    <property type="project" value="UniProtKB-SubCell"/>
</dbReference>
<dbReference type="GO" id="GO:0005525">
    <property type="term" value="F:GTP binding"/>
    <property type="evidence" value="ECO:0007669"/>
    <property type="project" value="UniProtKB-UniRule"/>
</dbReference>
<dbReference type="GO" id="GO:0003924">
    <property type="term" value="F:GTPase activity"/>
    <property type="evidence" value="ECO:0007669"/>
    <property type="project" value="InterPro"/>
</dbReference>
<dbReference type="GO" id="GO:0003746">
    <property type="term" value="F:translation elongation factor activity"/>
    <property type="evidence" value="ECO:0007669"/>
    <property type="project" value="UniProtKB-UniRule"/>
</dbReference>
<dbReference type="GO" id="GO:0032790">
    <property type="term" value="P:ribosome disassembly"/>
    <property type="evidence" value="ECO:0007669"/>
    <property type="project" value="TreeGrafter"/>
</dbReference>
<dbReference type="CDD" id="cd01886">
    <property type="entry name" value="EF-G"/>
    <property type="match status" value="1"/>
</dbReference>
<dbReference type="CDD" id="cd16262">
    <property type="entry name" value="EFG_III"/>
    <property type="match status" value="1"/>
</dbReference>
<dbReference type="CDD" id="cd01434">
    <property type="entry name" value="EFG_mtEFG1_IV"/>
    <property type="match status" value="1"/>
</dbReference>
<dbReference type="CDD" id="cd03713">
    <property type="entry name" value="EFG_mtEFG_C"/>
    <property type="match status" value="1"/>
</dbReference>
<dbReference type="CDD" id="cd04088">
    <property type="entry name" value="EFG_mtEFG_II"/>
    <property type="match status" value="1"/>
</dbReference>
<dbReference type="FunFam" id="2.40.30.10:FF:000006">
    <property type="entry name" value="Elongation factor G"/>
    <property type="match status" value="1"/>
</dbReference>
<dbReference type="FunFam" id="3.30.230.10:FF:000003">
    <property type="entry name" value="Elongation factor G"/>
    <property type="match status" value="1"/>
</dbReference>
<dbReference type="FunFam" id="3.30.70.240:FF:000001">
    <property type="entry name" value="Elongation factor G"/>
    <property type="match status" value="1"/>
</dbReference>
<dbReference type="FunFam" id="3.30.70.870:FF:000001">
    <property type="entry name" value="Elongation factor G"/>
    <property type="match status" value="1"/>
</dbReference>
<dbReference type="FunFam" id="3.40.50.300:FF:000029">
    <property type="entry name" value="Elongation factor G"/>
    <property type="match status" value="1"/>
</dbReference>
<dbReference type="Gene3D" id="3.30.230.10">
    <property type="match status" value="1"/>
</dbReference>
<dbReference type="Gene3D" id="3.30.70.240">
    <property type="match status" value="1"/>
</dbReference>
<dbReference type="Gene3D" id="3.30.70.870">
    <property type="entry name" value="Elongation Factor G (Translational Gtpase), domain 3"/>
    <property type="match status" value="1"/>
</dbReference>
<dbReference type="Gene3D" id="3.40.50.300">
    <property type="entry name" value="P-loop containing nucleotide triphosphate hydrolases"/>
    <property type="match status" value="1"/>
</dbReference>
<dbReference type="Gene3D" id="2.40.30.10">
    <property type="entry name" value="Translation factors"/>
    <property type="match status" value="1"/>
</dbReference>
<dbReference type="HAMAP" id="MF_00054_B">
    <property type="entry name" value="EF_G_EF_2_B"/>
    <property type="match status" value="1"/>
</dbReference>
<dbReference type="InterPro" id="IPR053905">
    <property type="entry name" value="EF-G-like_DII"/>
</dbReference>
<dbReference type="InterPro" id="IPR041095">
    <property type="entry name" value="EFG_II"/>
</dbReference>
<dbReference type="InterPro" id="IPR009022">
    <property type="entry name" value="EFG_III"/>
</dbReference>
<dbReference type="InterPro" id="IPR035647">
    <property type="entry name" value="EFG_III/V"/>
</dbReference>
<dbReference type="InterPro" id="IPR047872">
    <property type="entry name" value="EFG_IV"/>
</dbReference>
<dbReference type="InterPro" id="IPR035649">
    <property type="entry name" value="EFG_V"/>
</dbReference>
<dbReference type="InterPro" id="IPR000640">
    <property type="entry name" value="EFG_V-like"/>
</dbReference>
<dbReference type="InterPro" id="IPR031157">
    <property type="entry name" value="G_TR_CS"/>
</dbReference>
<dbReference type="InterPro" id="IPR027417">
    <property type="entry name" value="P-loop_NTPase"/>
</dbReference>
<dbReference type="InterPro" id="IPR020568">
    <property type="entry name" value="Ribosomal_Su5_D2-typ_SF"/>
</dbReference>
<dbReference type="InterPro" id="IPR014721">
    <property type="entry name" value="Ribsml_uS5_D2-typ_fold_subgr"/>
</dbReference>
<dbReference type="InterPro" id="IPR005225">
    <property type="entry name" value="Small_GTP-bd"/>
</dbReference>
<dbReference type="InterPro" id="IPR000795">
    <property type="entry name" value="T_Tr_GTP-bd_dom"/>
</dbReference>
<dbReference type="InterPro" id="IPR009000">
    <property type="entry name" value="Transl_B-barrel_sf"/>
</dbReference>
<dbReference type="InterPro" id="IPR004540">
    <property type="entry name" value="Transl_elong_EFG/EF2"/>
</dbReference>
<dbReference type="InterPro" id="IPR005517">
    <property type="entry name" value="Transl_elong_EFG/EF2_IV"/>
</dbReference>
<dbReference type="NCBIfam" id="TIGR00484">
    <property type="entry name" value="EF-G"/>
    <property type="match status" value="1"/>
</dbReference>
<dbReference type="NCBIfam" id="NF009379">
    <property type="entry name" value="PRK12740.1-3"/>
    <property type="match status" value="1"/>
</dbReference>
<dbReference type="NCBIfam" id="NF009381">
    <property type="entry name" value="PRK12740.1-5"/>
    <property type="match status" value="1"/>
</dbReference>
<dbReference type="NCBIfam" id="NF009891">
    <property type="entry name" value="PRK13351.1-1"/>
    <property type="match status" value="1"/>
</dbReference>
<dbReference type="NCBIfam" id="TIGR00231">
    <property type="entry name" value="small_GTP"/>
    <property type="match status" value="1"/>
</dbReference>
<dbReference type="PANTHER" id="PTHR43261:SF1">
    <property type="entry name" value="RIBOSOME-RELEASING FACTOR 2, MITOCHONDRIAL"/>
    <property type="match status" value="1"/>
</dbReference>
<dbReference type="PANTHER" id="PTHR43261">
    <property type="entry name" value="TRANSLATION ELONGATION FACTOR G-RELATED"/>
    <property type="match status" value="1"/>
</dbReference>
<dbReference type="Pfam" id="PF22042">
    <property type="entry name" value="EF-G_D2"/>
    <property type="match status" value="1"/>
</dbReference>
<dbReference type="Pfam" id="PF00679">
    <property type="entry name" value="EFG_C"/>
    <property type="match status" value="1"/>
</dbReference>
<dbReference type="Pfam" id="PF14492">
    <property type="entry name" value="EFG_III"/>
    <property type="match status" value="1"/>
</dbReference>
<dbReference type="Pfam" id="PF03764">
    <property type="entry name" value="EFG_IV"/>
    <property type="match status" value="1"/>
</dbReference>
<dbReference type="Pfam" id="PF00009">
    <property type="entry name" value="GTP_EFTU"/>
    <property type="match status" value="1"/>
</dbReference>
<dbReference type="PRINTS" id="PR00315">
    <property type="entry name" value="ELONGATNFCT"/>
</dbReference>
<dbReference type="SMART" id="SM00838">
    <property type="entry name" value="EFG_C"/>
    <property type="match status" value="1"/>
</dbReference>
<dbReference type="SMART" id="SM00889">
    <property type="entry name" value="EFG_IV"/>
    <property type="match status" value="1"/>
</dbReference>
<dbReference type="SUPFAM" id="SSF54980">
    <property type="entry name" value="EF-G C-terminal domain-like"/>
    <property type="match status" value="2"/>
</dbReference>
<dbReference type="SUPFAM" id="SSF52540">
    <property type="entry name" value="P-loop containing nucleoside triphosphate hydrolases"/>
    <property type="match status" value="1"/>
</dbReference>
<dbReference type="SUPFAM" id="SSF54211">
    <property type="entry name" value="Ribosomal protein S5 domain 2-like"/>
    <property type="match status" value="1"/>
</dbReference>
<dbReference type="SUPFAM" id="SSF50447">
    <property type="entry name" value="Translation proteins"/>
    <property type="match status" value="1"/>
</dbReference>
<dbReference type="PROSITE" id="PS00301">
    <property type="entry name" value="G_TR_1"/>
    <property type="match status" value="1"/>
</dbReference>
<dbReference type="PROSITE" id="PS51722">
    <property type="entry name" value="G_TR_2"/>
    <property type="match status" value="1"/>
</dbReference>
<keyword id="KW-0963">Cytoplasm</keyword>
<keyword id="KW-0251">Elongation factor</keyword>
<keyword id="KW-0342">GTP-binding</keyword>
<keyword id="KW-0547">Nucleotide-binding</keyword>
<keyword id="KW-0648">Protein biosynthesis</keyword>
<accession>B9K883</accession>
<name>EFG_THENN</name>
<feature type="chain" id="PRO_1000201495" description="Elongation factor G">
    <location>
        <begin position="1"/>
        <end position="695"/>
    </location>
</feature>
<feature type="domain" description="tr-type G">
    <location>
        <begin position="12"/>
        <end position="286"/>
    </location>
</feature>
<feature type="binding site" evidence="1">
    <location>
        <begin position="21"/>
        <end position="28"/>
    </location>
    <ligand>
        <name>GTP</name>
        <dbReference type="ChEBI" id="CHEBI:37565"/>
    </ligand>
</feature>
<feature type="binding site" evidence="1">
    <location>
        <begin position="85"/>
        <end position="89"/>
    </location>
    <ligand>
        <name>GTP</name>
        <dbReference type="ChEBI" id="CHEBI:37565"/>
    </ligand>
</feature>
<feature type="binding site" evidence="1">
    <location>
        <begin position="139"/>
        <end position="142"/>
    </location>
    <ligand>
        <name>GTP</name>
        <dbReference type="ChEBI" id="CHEBI:37565"/>
    </ligand>
</feature>
<proteinExistence type="inferred from homology"/>